<feature type="chain" id="PRO_0000077449" description="Cell surface-binding protein OPG105">
    <location>
        <begin position="1"/>
        <end position="304"/>
    </location>
</feature>
<feature type="topological domain" description="Virion surface" evidence="3">
    <location>
        <begin position="1"/>
        <end position="275"/>
    </location>
</feature>
<feature type="transmembrane region" description="Helical" evidence="3">
    <location>
        <begin position="276"/>
        <end position="294"/>
    </location>
</feature>
<feature type="topological domain" description="Intravirion" evidence="3">
    <location>
        <begin position="295"/>
        <end position="304"/>
    </location>
</feature>
<feature type="domain" description="Alpha-carbonic anhydrase" evidence="4">
    <location>
        <begin position="1"/>
        <end position="235"/>
    </location>
</feature>
<feature type="disulfide bond" description="Interchain" evidence="1">
    <location>
        <position position="262"/>
    </location>
</feature>
<accession>P20508</accession>
<comment type="function">
    <text evidence="1">Binds to chondroitin sulfate on the cell surface to provide virion attachment to target cell.</text>
</comment>
<comment type="subunit">
    <text evidence="2">Homodimer; disulfide-linked.</text>
</comment>
<comment type="subcellular location">
    <subcellularLocation>
        <location evidence="2">Virion membrane</location>
    </subcellularLocation>
    <text evidence="2">Component of the mature virion (MV) membrane.</text>
</comment>
<comment type="induction">
    <text>Expressed in the late phase of the viral replicative cycle.</text>
</comment>
<comment type="PTM">
    <text evidence="2">Apparently non-glycosylated.</text>
</comment>
<comment type="similarity">
    <text evidence="5">Belongs to the alpha-carbonic anhydrase family.</text>
</comment>
<organism>
    <name type="scientific">Vaccinia virus (strain Copenhagen)</name>
    <name type="common">VACV</name>
    <dbReference type="NCBI Taxonomy" id="10249"/>
    <lineage>
        <taxon>Viruses</taxon>
        <taxon>Varidnaviria</taxon>
        <taxon>Bamfordvirae</taxon>
        <taxon>Nucleocytoviricota</taxon>
        <taxon>Pokkesviricetes</taxon>
        <taxon>Chitovirales</taxon>
        <taxon>Poxviridae</taxon>
        <taxon>Chordopoxvirinae</taxon>
        <taxon>Orthopoxvirus</taxon>
        <taxon>Vaccinia virus</taxon>
    </lineage>
</organism>
<reference key="1">
    <citation type="journal article" date="1990" name="Virology">
        <title>The complete DNA sequence of vaccinia virus.</title>
        <authorList>
            <person name="Goebel S.J."/>
            <person name="Johnson G.P."/>
            <person name="Perkus M.E."/>
            <person name="Davis S.W."/>
            <person name="Winslow J.P."/>
            <person name="Paoletti E."/>
        </authorList>
    </citation>
    <scope>NUCLEOTIDE SEQUENCE [LARGE SCALE GENOMIC DNA]</scope>
</reference>
<reference key="2">
    <citation type="journal article" date="1990" name="Virology">
        <title>Appendix to 'The complete DNA sequence of vaccinia virus'.</title>
        <authorList>
            <person name="Goebel S.J."/>
            <person name="Johnson G.P."/>
            <person name="Perkus M.E."/>
            <person name="Davis S.W."/>
            <person name="Winslow J.P."/>
            <person name="Paoletti E."/>
        </authorList>
    </citation>
    <scope>COMPLETE GENOME</scope>
</reference>
<reference key="3">
    <citation type="journal article" date="1999" name="J. Virol.">
        <title>Vaccinia virus envelope D8L protein binds to cell surface chondroitin sulfate and mediates the adsorption of intracellular mature virions to cells.</title>
        <authorList>
            <person name="Hsiao J.C."/>
            <person name="Chung C.S."/>
            <person name="Chang W."/>
        </authorList>
    </citation>
    <scope>FUNCTION</scope>
</reference>
<protein>
    <recommendedName>
        <fullName>Cell surface-binding protein OPG105</fullName>
    </recommendedName>
    <alternativeName>
        <fullName>Carbonic anhydrase homolog</fullName>
    </alternativeName>
</protein>
<keyword id="KW-1015">Disulfide bond</keyword>
<keyword id="KW-0945">Host-virus interaction</keyword>
<keyword id="KW-0426">Late protein</keyword>
<keyword id="KW-0472">Membrane</keyword>
<keyword id="KW-1185">Reference proteome</keyword>
<keyword id="KW-0812">Transmembrane</keyword>
<keyword id="KW-1133">Transmembrane helix</keyword>
<keyword id="KW-1161">Viral attachment to host cell</keyword>
<keyword id="KW-0261">Viral envelope protein</keyword>
<keyword id="KW-0946">Virion</keyword>
<keyword id="KW-1160">Virus entry into host cell</keyword>
<name>CAHH_VACCC</name>
<evidence type="ECO:0000250" key="1"/>
<evidence type="ECO:0000250" key="2">
    <source>
        <dbReference type="UniProtKB" id="P04195"/>
    </source>
</evidence>
<evidence type="ECO:0000255" key="3"/>
<evidence type="ECO:0000255" key="4">
    <source>
        <dbReference type="PROSITE-ProRule" id="PRU01134"/>
    </source>
</evidence>
<evidence type="ECO:0000305" key="5"/>
<dbReference type="EMBL" id="M35027">
    <property type="protein sequence ID" value="AAA48107.1"/>
    <property type="molecule type" value="Genomic_DNA"/>
</dbReference>
<dbReference type="PIR" id="G42515">
    <property type="entry name" value="CRVZ7P"/>
</dbReference>
<dbReference type="SMR" id="P20508"/>
<dbReference type="Proteomes" id="UP000008269">
    <property type="component" value="Segment"/>
</dbReference>
<dbReference type="GO" id="GO:0016020">
    <property type="term" value="C:membrane"/>
    <property type="evidence" value="ECO:0007669"/>
    <property type="project" value="UniProtKB-KW"/>
</dbReference>
<dbReference type="GO" id="GO:0019031">
    <property type="term" value="C:viral envelope"/>
    <property type="evidence" value="ECO:0007669"/>
    <property type="project" value="UniProtKB-KW"/>
</dbReference>
<dbReference type="GO" id="GO:0055036">
    <property type="term" value="C:virion membrane"/>
    <property type="evidence" value="ECO:0007669"/>
    <property type="project" value="UniProtKB-SubCell"/>
</dbReference>
<dbReference type="GO" id="GO:0004089">
    <property type="term" value="F:carbonate dehydratase activity"/>
    <property type="evidence" value="ECO:0007669"/>
    <property type="project" value="InterPro"/>
</dbReference>
<dbReference type="GO" id="GO:0008270">
    <property type="term" value="F:zinc ion binding"/>
    <property type="evidence" value="ECO:0007669"/>
    <property type="project" value="InterPro"/>
</dbReference>
<dbReference type="GO" id="GO:0141024">
    <property type="term" value="P:adhesion of symbiont to host cell surface via host membrane carbohydrate"/>
    <property type="evidence" value="ECO:0000269"/>
    <property type="project" value="SigSci"/>
</dbReference>
<dbReference type="GO" id="GO:0046718">
    <property type="term" value="P:symbiont entry into host cell"/>
    <property type="evidence" value="ECO:0007669"/>
    <property type="project" value="UniProtKB-KW"/>
</dbReference>
<dbReference type="GO" id="GO:0019062">
    <property type="term" value="P:virion attachment to host cell"/>
    <property type="evidence" value="ECO:0007669"/>
    <property type="project" value="UniProtKB-KW"/>
</dbReference>
<dbReference type="CDD" id="cd00326">
    <property type="entry name" value="alpha_CA"/>
    <property type="match status" value="1"/>
</dbReference>
<dbReference type="Gene3D" id="3.10.200.10">
    <property type="entry name" value="Alpha carbonic anhydrase"/>
    <property type="match status" value="1"/>
</dbReference>
<dbReference type="InterPro" id="IPR001148">
    <property type="entry name" value="CA_dom"/>
</dbReference>
<dbReference type="InterPro" id="IPR036398">
    <property type="entry name" value="CA_dom_sf"/>
</dbReference>
<dbReference type="InterPro" id="IPR023561">
    <property type="entry name" value="Carbonic_anhydrase_a-class"/>
</dbReference>
<dbReference type="PANTHER" id="PTHR18952">
    <property type="entry name" value="CARBONIC ANHYDRASE"/>
    <property type="match status" value="1"/>
</dbReference>
<dbReference type="PANTHER" id="PTHR18952:SF124">
    <property type="entry name" value="CARBONIC ANHYDRASE 7"/>
    <property type="match status" value="1"/>
</dbReference>
<dbReference type="Pfam" id="PF00194">
    <property type="entry name" value="Carb_anhydrase"/>
    <property type="match status" value="1"/>
</dbReference>
<dbReference type="SMART" id="SM01057">
    <property type="entry name" value="Carb_anhydrase"/>
    <property type="match status" value="1"/>
</dbReference>
<dbReference type="SUPFAM" id="SSF51069">
    <property type="entry name" value="Carbonic anhydrase"/>
    <property type="match status" value="1"/>
</dbReference>
<dbReference type="PROSITE" id="PS51144">
    <property type="entry name" value="ALPHA_CA_2"/>
    <property type="match status" value="1"/>
</dbReference>
<proteinExistence type="evidence at transcript level"/>
<sequence>MPQQLSPINIETKKAISNARLKPLDIHYNESKPTTIQNTGKLVRINFKGGYISGGFLPNEYVLSSLHIYWGKEDDYGSNHLIDVYKYSGEINLVHWNKKKYSSYEEAKKHDDGLIIISIFLQVSDHKNVYFQKIVNQLDSIRSANTSAPFDSVFYLDNLLPSTLDYFTYLGTTIKHSADAVWIIFPTPINIHSDQLSKFRTLLSSSNHDGKPYYITENYRNPYKLNDDTQVYYSGEIIRAATTSPARENYFMRWLSDLRETCFSYYQKYIEGNKTFAIIAIVFVFILTAILFLMSRRYSREKQN</sequence>
<organismHost>
    <name type="scientific">Homo sapiens</name>
    <name type="common">Human</name>
    <dbReference type="NCBI Taxonomy" id="9606"/>
</organismHost>
<gene>
    <name type="primary">OPG105</name>
    <name type="ORF">D8L</name>
</gene>